<accession>A6YF56</accession>
<evidence type="ECO:0000250" key="1">
    <source>
        <dbReference type="UniProtKB" id="P02768"/>
    </source>
</evidence>
<evidence type="ECO:0000250" key="2">
    <source>
        <dbReference type="UniProtKB" id="P02769"/>
    </source>
</evidence>
<evidence type="ECO:0000250" key="3">
    <source>
        <dbReference type="UniProtKB" id="P02770"/>
    </source>
</evidence>
<evidence type="ECO:0000250" key="4">
    <source>
        <dbReference type="UniProtKB" id="P07724"/>
    </source>
</evidence>
<evidence type="ECO:0000255" key="5"/>
<evidence type="ECO:0000255" key="6">
    <source>
        <dbReference type="PROSITE-ProRule" id="PRU00769"/>
    </source>
</evidence>
<evidence type="ECO:0000269" key="7">
    <source>
    </source>
</evidence>
<evidence type="ECO:0000305" key="8"/>
<evidence type="ECO:0000312" key="9">
    <source>
        <dbReference type="EMBL" id="ABR68005.1"/>
    </source>
</evidence>
<sequence length="608" mass="68225">MKWVTFLLLLFVSDSAFSRGLFRRDAHKSEIAHRFKDLGEQHFKGLVLIAFSQFLQKCPYEEHVKLVNEVTDFAKTCVADESAENCDKSLHTLFGDKLCAIPTLRDSYGELADCCAKKEPERNECFLKHKDDHPNLPPFVRPDAEAMCTSFQENAVTFMGHYLHEVARRHPYFYAPELLYYAEKYSAIMTECCGEADKAACITPKLDALKEKALASSVNQRLKCSSLQRFGQRAFKAWAVARMSQKFPKADFAEITKLATDLTKLTEECCHGDLLECADDRAELAKYMCENQASISSKLQACCDKPVLKKSHCLSEVENDDLPADLPSLAADFVEDKEVCKNYAEAKDVFLGTFLYEYARRHPDYSVALLLRLAKKYEATLEKCCAEADPSACYGKVLDEFQPLVEEPKNLVKANCELFEKLGEYGFQNALIVRYTQKAPQVSTPTLVEAARNLGKVGSKCCVLPEAQRLPCVEDYISAILNRVCVLHEKTPVSEQVTKCCTGSVVERRPCFSALPVDETYVPKEFKAETFTFHADICSLPEKEKQMKKQAALVELVKHKPKATGPQLRTVLGEFTAFLDKCCKAEDKEACFSEDGPKLVASSQAALA</sequence>
<organism>
    <name type="scientific">Mesocricetus auratus</name>
    <name type="common">Golden hamster</name>
    <dbReference type="NCBI Taxonomy" id="10036"/>
    <lineage>
        <taxon>Eukaryota</taxon>
        <taxon>Metazoa</taxon>
        <taxon>Chordata</taxon>
        <taxon>Craniata</taxon>
        <taxon>Vertebrata</taxon>
        <taxon>Euteleostomi</taxon>
        <taxon>Mammalia</taxon>
        <taxon>Eutheria</taxon>
        <taxon>Euarchontoglires</taxon>
        <taxon>Glires</taxon>
        <taxon>Rodentia</taxon>
        <taxon>Myomorpha</taxon>
        <taxon>Muroidea</taxon>
        <taxon>Cricetidae</taxon>
        <taxon>Cricetinae</taxon>
        <taxon>Mesocricetus</taxon>
    </lineage>
</organism>
<protein>
    <recommendedName>
        <fullName evidence="1 9">Albumin</fullName>
    </recommendedName>
</protein>
<dbReference type="EMBL" id="EF488484">
    <property type="protein sequence ID" value="ABR68005.1"/>
    <property type="molecule type" value="mRNA"/>
</dbReference>
<dbReference type="RefSeq" id="NP_001268578.1">
    <property type="nucleotide sequence ID" value="NM_001281649.1"/>
</dbReference>
<dbReference type="SMR" id="A6YF56"/>
<dbReference type="STRING" id="10036.ENSMAUP00000001322"/>
<dbReference type="GeneID" id="101837229"/>
<dbReference type="KEGG" id="maua:101837229"/>
<dbReference type="CTD" id="213"/>
<dbReference type="eggNOG" id="ENOG502R7EA">
    <property type="taxonomic scope" value="Eukaryota"/>
</dbReference>
<dbReference type="OrthoDB" id="9875082at2759"/>
<dbReference type="Proteomes" id="UP000189706">
    <property type="component" value="Unplaced"/>
</dbReference>
<dbReference type="GO" id="GO:0072562">
    <property type="term" value="C:blood microparticle"/>
    <property type="evidence" value="ECO:0007669"/>
    <property type="project" value="TreeGrafter"/>
</dbReference>
<dbReference type="GO" id="GO:0005737">
    <property type="term" value="C:cytoplasm"/>
    <property type="evidence" value="ECO:0007669"/>
    <property type="project" value="TreeGrafter"/>
</dbReference>
<dbReference type="GO" id="GO:1903981">
    <property type="term" value="F:enterobactin binding"/>
    <property type="evidence" value="ECO:0000250"/>
    <property type="project" value="UniProtKB"/>
</dbReference>
<dbReference type="GO" id="GO:0008289">
    <property type="term" value="F:lipid binding"/>
    <property type="evidence" value="ECO:0007669"/>
    <property type="project" value="UniProtKB-KW"/>
</dbReference>
<dbReference type="GO" id="GO:0046872">
    <property type="term" value="F:metal ion binding"/>
    <property type="evidence" value="ECO:0007669"/>
    <property type="project" value="UniProtKB-KW"/>
</dbReference>
<dbReference type="CDD" id="cd00015">
    <property type="entry name" value="ALBUMIN"/>
    <property type="match status" value="3"/>
</dbReference>
<dbReference type="FunFam" id="1.10.246.10:FF:000001">
    <property type="entry name" value="Serum albumin"/>
    <property type="match status" value="2"/>
</dbReference>
<dbReference type="FunFam" id="1.10.246.10:FF:000002">
    <property type="entry name" value="Serum albumin"/>
    <property type="match status" value="2"/>
</dbReference>
<dbReference type="FunFam" id="1.10.246.10:FF:000003">
    <property type="entry name" value="Serum albumin"/>
    <property type="match status" value="1"/>
</dbReference>
<dbReference type="Gene3D" id="1.10.246.10">
    <property type="match status" value="6"/>
</dbReference>
<dbReference type="InterPro" id="IPR000264">
    <property type="entry name" value="ALB/AFP/VDB"/>
</dbReference>
<dbReference type="InterPro" id="IPR020858">
    <property type="entry name" value="Serum_albumin-like"/>
</dbReference>
<dbReference type="InterPro" id="IPR021177">
    <property type="entry name" value="Serum_albumin/AFP/Afamin"/>
</dbReference>
<dbReference type="InterPro" id="IPR020857">
    <property type="entry name" value="Serum_albumin_CS"/>
</dbReference>
<dbReference type="InterPro" id="IPR014760">
    <property type="entry name" value="Serum_albumin_N"/>
</dbReference>
<dbReference type="PANTHER" id="PTHR11385:SF15">
    <property type="entry name" value="ALBUMIN"/>
    <property type="match status" value="1"/>
</dbReference>
<dbReference type="PANTHER" id="PTHR11385">
    <property type="entry name" value="SERUM ALBUMIN-RELATED"/>
    <property type="match status" value="1"/>
</dbReference>
<dbReference type="Pfam" id="PF00273">
    <property type="entry name" value="Serum_albumin"/>
    <property type="match status" value="3"/>
</dbReference>
<dbReference type="PIRSF" id="PIRSF002520">
    <property type="entry name" value="Serum_albumin_subgroup"/>
    <property type="match status" value="1"/>
</dbReference>
<dbReference type="PRINTS" id="PR00802">
    <property type="entry name" value="SERUMALBUMIN"/>
</dbReference>
<dbReference type="SMART" id="SM00103">
    <property type="entry name" value="ALBUMIN"/>
    <property type="match status" value="3"/>
</dbReference>
<dbReference type="SUPFAM" id="SSF48552">
    <property type="entry name" value="Serum albumin-like"/>
    <property type="match status" value="3"/>
</dbReference>
<dbReference type="PROSITE" id="PS00212">
    <property type="entry name" value="ALBUMIN_1"/>
    <property type="match status" value="2"/>
</dbReference>
<dbReference type="PROSITE" id="PS51438">
    <property type="entry name" value="ALBUMIN_2"/>
    <property type="match status" value="3"/>
</dbReference>
<keyword id="KW-0106">Calcium</keyword>
<keyword id="KW-0165">Cleavage on pair of basic residues</keyword>
<keyword id="KW-0186">Copper</keyword>
<keyword id="KW-1015">Disulfide bond</keyword>
<keyword id="KW-0446">Lipid-binding</keyword>
<keyword id="KW-0479">Metal-binding</keyword>
<keyword id="KW-0488">Methylation</keyword>
<keyword id="KW-0597">Phosphoprotein</keyword>
<keyword id="KW-1185">Reference proteome</keyword>
<keyword id="KW-0677">Repeat</keyword>
<keyword id="KW-0964">Secreted</keyword>
<keyword id="KW-0732">Signal</keyword>
<keyword id="KW-0862">Zinc</keyword>
<name>ALBU_MESAU</name>
<feature type="signal peptide" evidence="5">
    <location>
        <begin position="1"/>
        <end position="18"/>
    </location>
</feature>
<feature type="propeptide" id="PRO_0000394754" evidence="3">
    <location>
        <begin position="19"/>
        <end position="24"/>
    </location>
</feature>
<feature type="chain" id="PRO_0000394755" description="Albumin" evidence="1">
    <location>
        <begin position="25"/>
        <end position="608"/>
    </location>
</feature>
<feature type="domain" description="Albumin 1" evidence="6">
    <location>
        <begin position="19"/>
        <end position="211"/>
    </location>
</feature>
<feature type="domain" description="Albumin 2" evidence="6">
    <location>
        <begin position="212"/>
        <end position="403"/>
    </location>
</feature>
<feature type="domain" description="Albumin 3" evidence="6">
    <location>
        <begin position="404"/>
        <end position="601"/>
    </location>
</feature>
<feature type="binding site" evidence="3">
    <location>
        <position position="27"/>
    </location>
    <ligand>
        <name>Cu cation</name>
        <dbReference type="ChEBI" id="CHEBI:23378"/>
    </ligand>
</feature>
<feature type="binding site" evidence="2">
    <location>
        <position position="30"/>
    </location>
    <ligand>
        <name>Ca(2+)</name>
        <dbReference type="ChEBI" id="CHEBI:29108"/>
        <label>1</label>
    </ligand>
</feature>
<feature type="binding site" evidence="2">
    <location>
        <position position="37"/>
    </location>
    <ligand>
        <name>Ca(2+)</name>
        <dbReference type="ChEBI" id="CHEBI:29108"/>
        <label>2</label>
    </ligand>
</feature>
<feature type="binding site" evidence="1">
    <location>
        <position position="91"/>
    </location>
    <ligand>
        <name>Zn(2+)</name>
        <dbReference type="ChEBI" id="CHEBI:29105"/>
    </ligand>
</feature>
<feature type="binding site" evidence="2">
    <location>
        <position position="268"/>
    </location>
    <ligand>
        <name>Ca(2+)</name>
        <dbReference type="ChEBI" id="CHEBI:29108"/>
        <label>1</label>
    </ligand>
</feature>
<feature type="binding site" evidence="1">
    <location>
        <position position="271"/>
    </location>
    <ligand>
        <name>Zn(2+)</name>
        <dbReference type="ChEBI" id="CHEBI:29105"/>
    </ligand>
</feature>
<feature type="binding site" evidence="2">
    <location>
        <position position="273"/>
    </location>
    <ligand>
        <name>Ca(2+)</name>
        <dbReference type="ChEBI" id="CHEBI:29108"/>
        <label>1</label>
    </ligand>
</feature>
<feature type="binding site" evidence="1">
    <location>
        <position position="273"/>
    </location>
    <ligand>
        <name>Zn(2+)</name>
        <dbReference type="ChEBI" id="CHEBI:29105"/>
    </ligand>
</feature>
<feature type="binding site" evidence="2">
    <location>
        <position position="276"/>
    </location>
    <ligand>
        <name>Ca(2+)</name>
        <dbReference type="ChEBI" id="CHEBI:29108"/>
        <label>1</label>
    </ligand>
</feature>
<feature type="binding site" evidence="2">
    <location>
        <position position="279"/>
    </location>
    <ligand>
        <name>Ca(2+)</name>
        <dbReference type="ChEBI" id="CHEBI:29108"/>
        <label>2</label>
    </ligand>
</feature>
<feature type="modified residue" description="Phosphoserine" evidence="1">
    <location>
        <position position="29"/>
    </location>
</feature>
<feature type="modified residue" description="Phosphoserine" evidence="1">
    <location>
        <position position="82"/>
    </location>
</feature>
<feature type="modified residue" description="Phosphoserine" evidence="1">
    <location>
        <position position="89"/>
    </location>
</feature>
<feature type="modified residue" description="Phosphoserine" evidence="4">
    <location>
        <position position="297"/>
    </location>
</feature>
<feature type="modified residue" description="Phosphoserine" evidence="1">
    <location>
        <position position="443"/>
    </location>
</feature>
<feature type="modified residue" description="Phosphothreonine" evidence="1">
    <location>
        <position position="444"/>
    </location>
</feature>
<feature type="modified residue" description="Phosphothreonine" evidence="1">
    <location>
        <position position="446"/>
    </location>
</feature>
<feature type="modified residue" description="N6-succinyllysine" evidence="4">
    <location>
        <position position="460"/>
    </location>
</feature>
<feature type="modified residue" description="Phosphoserine" evidence="1">
    <location>
        <position position="513"/>
    </location>
</feature>
<feature type="modified residue" description="N6-succinyllysine" evidence="4">
    <location>
        <position position="543"/>
    </location>
</feature>
<feature type="modified residue" description="N6-methyllysine" evidence="1">
    <location>
        <position position="558"/>
    </location>
</feature>
<feature type="modified residue" description="Phosphothreonine" evidence="3">
    <location>
        <position position="570"/>
    </location>
</feature>
<feature type="modified residue" description="N6-succinyllysine" evidence="4">
    <location>
        <position position="588"/>
    </location>
</feature>
<feature type="disulfide bond" evidence="1 6">
    <location>
        <begin position="77"/>
        <end position="86"/>
    </location>
</feature>
<feature type="disulfide bond" evidence="1 6">
    <location>
        <begin position="99"/>
        <end position="115"/>
    </location>
</feature>
<feature type="disulfide bond" evidence="1 6">
    <location>
        <begin position="114"/>
        <end position="125"/>
    </location>
</feature>
<feature type="disulfide bond" evidence="1 6">
    <location>
        <begin position="148"/>
        <end position="193"/>
    </location>
</feature>
<feature type="disulfide bond" evidence="1 6">
    <location>
        <begin position="192"/>
        <end position="201"/>
    </location>
</feature>
<feature type="disulfide bond" evidence="1 6">
    <location>
        <begin position="224"/>
        <end position="270"/>
    </location>
</feature>
<feature type="disulfide bond" evidence="1 6">
    <location>
        <begin position="269"/>
        <end position="277"/>
    </location>
</feature>
<feature type="disulfide bond" evidence="1 6">
    <location>
        <begin position="289"/>
        <end position="303"/>
    </location>
</feature>
<feature type="disulfide bond" evidence="1 6">
    <location>
        <begin position="302"/>
        <end position="313"/>
    </location>
</feature>
<feature type="disulfide bond" evidence="1 6">
    <location>
        <begin position="340"/>
        <end position="385"/>
    </location>
</feature>
<feature type="disulfide bond" evidence="1 6">
    <location>
        <begin position="384"/>
        <end position="393"/>
    </location>
</feature>
<feature type="disulfide bond" evidence="1 6">
    <location>
        <begin position="416"/>
        <end position="462"/>
    </location>
</feature>
<feature type="disulfide bond" evidence="1 6">
    <location>
        <begin position="461"/>
        <end position="472"/>
    </location>
</feature>
<feature type="disulfide bond" evidence="1 6">
    <location>
        <begin position="485"/>
        <end position="501"/>
    </location>
</feature>
<feature type="disulfide bond" evidence="1 6">
    <location>
        <begin position="500"/>
        <end position="511"/>
    </location>
</feature>
<feature type="disulfide bond" evidence="1 6">
    <location>
        <begin position="538"/>
        <end position="583"/>
    </location>
</feature>
<feature type="disulfide bond" evidence="1 6">
    <location>
        <begin position="582"/>
        <end position="591"/>
    </location>
</feature>
<reference evidence="8 9" key="1">
    <citation type="journal article" date="2007" name="Int. J. Parasitol.">
        <title>Schistosome albumin is of host, not parasite, origin.</title>
        <authorList>
            <person name="DeMarco R."/>
            <person name="Mathieson W."/>
            <person name="Dillon G.P."/>
            <person name="Wilson R.A."/>
        </authorList>
    </citation>
    <scope>NUCLEOTIDE SEQUENCE [MRNA]</scope>
    <scope>IDENTIFICATION BY MASS SPECTROMETRY</scope>
    <source>
        <tissue evidence="7">Liver</tissue>
    </source>
</reference>
<reference key="2">
    <citation type="journal article" date="2010" name="Asian J. Androl.">
        <title>Glucose-regulated protein precursor (GRP78) and tumor rejection antigen (GP96) are unique to hamster caput epididymal spermatozoa.</title>
        <authorList>
            <person name="Kameshwari D.B."/>
            <person name="Bhande S."/>
            <person name="Sundaram C.S."/>
            <person name="Kota V."/>
            <person name="Siva A.B."/>
            <person name="Shivaji S."/>
        </authorList>
    </citation>
    <scope>IDENTIFICATION BY MASS SPECTROMETRY</scope>
</reference>
<proteinExistence type="evidence at protein level"/>
<comment type="function">
    <text evidence="1 2 8">Binds water, Ca(2+), Na(+), K(+), fatty acids, hormones, bilirubin and drugs. Its main function is the regulation of the colloidal osmotic pressure of blood. Major zinc transporter in plasma, typically binds about 80% of all plasma zinc (By similarity). Major calcium and magnesium transporter in plasma, binds approximately 45% of circulating calcium and magnesium in plasma (By similarity). Potentially has more than two calcium-binding sites and might additionally bind calcium in a non-specific manner (By similarity). The shared binding site between zinc and calcium at residue Asp-273 suggests a crosstalk between zinc and calcium transport in the blood (By similarity). The rank order of affinity is zinc &gt; calcium &gt; magnesium (By similarity). Binds to the bacterial siderophore enterobactin and inhibits enterobactin-mediated iron uptake of E.coli from ferric transferrin, and may thereby limit the utilization of iron and growth of enteric bacteria such as E.coli (By similarity). Does not prevent iron uptake by the bacterial siderophore aerobactin (By similarity).</text>
</comment>
<comment type="subunit">
    <text evidence="1 4">Interacts with FCGRT; this interaction regulates ALB homeostasis (By similarity). Interacts with TASOR (By similarity). In plasma, occurs in a covalently-linked complex with chromophore-bound alpha-1-microglobulin; this interaction does not prevent fatty acid binding to ALB.</text>
</comment>
<comment type="subcellular location">
    <subcellularLocation>
        <location evidence="8">Secreted</location>
    </subcellularLocation>
</comment>
<comment type="tissue specificity">
    <text evidence="8">Plasma.</text>
</comment>
<comment type="similarity">
    <text evidence="6">Belongs to the ALB/AFP/VDB family.</text>
</comment>
<gene>
    <name evidence="1" type="primary">ALB</name>
</gene>